<reference key="1">
    <citation type="journal article" date="1990" name="J. Bacteriol.">
        <title>Nucleotide sequence of the gene encoding the repressor for the histidine utilization genes of Pseudomonas putida.</title>
        <authorList>
            <person name="Allison S.L."/>
            <person name="Phillips A.T."/>
        </authorList>
    </citation>
    <scope>NUCLEOTIDE SEQUENCE [GENOMIC DNA]</scope>
</reference>
<name>HUTC_PSEPU</name>
<evidence type="ECO:0000255" key="1">
    <source>
        <dbReference type="PROSITE-ProRule" id="PRU00307"/>
    </source>
</evidence>
<accession>P22773</accession>
<comment type="function">
    <text>Repressor which binds to the hutP region in the histidine utilization (hut) operon. It blocks the expression of all the hut genes in the absence of inducer.</text>
</comment>
<comment type="pathway">
    <text>Amino-acid degradation; L-histidine degradation into L-glutamate [regulation].</text>
</comment>
<proteinExistence type="predicted"/>
<organism>
    <name type="scientific">Pseudomonas putida</name>
    <name type="common">Arthrobacter siderocapsulatus</name>
    <dbReference type="NCBI Taxonomy" id="303"/>
    <lineage>
        <taxon>Bacteria</taxon>
        <taxon>Pseudomonadati</taxon>
        <taxon>Pseudomonadota</taxon>
        <taxon>Gammaproteobacteria</taxon>
        <taxon>Pseudomonadales</taxon>
        <taxon>Pseudomonadaceae</taxon>
        <taxon>Pseudomonas</taxon>
    </lineage>
</organism>
<dbReference type="EMBL" id="M33922">
    <property type="protein sequence ID" value="AAA25841.1"/>
    <property type="molecule type" value="Genomic_DNA"/>
</dbReference>
<dbReference type="PIR" id="A36729">
    <property type="entry name" value="A36729"/>
</dbReference>
<dbReference type="SMR" id="P22773"/>
<dbReference type="eggNOG" id="COG2188">
    <property type="taxonomic scope" value="Bacteria"/>
</dbReference>
<dbReference type="OrthoDB" id="9808698at2"/>
<dbReference type="UniPathway" id="UPA00379"/>
<dbReference type="GO" id="GO:0003677">
    <property type="term" value="F:DNA binding"/>
    <property type="evidence" value="ECO:0007669"/>
    <property type="project" value="UniProtKB-KW"/>
</dbReference>
<dbReference type="GO" id="GO:0003700">
    <property type="term" value="F:DNA-binding transcription factor activity"/>
    <property type="evidence" value="ECO:0007669"/>
    <property type="project" value="InterPro"/>
</dbReference>
<dbReference type="GO" id="GO:0019556">
    <property type="term" value="P:L-histidine catabolic process to glutamate and formamide"/>
    <property type="evidence" value="ECO:0007669"/>
    <property type="project" value="UniProtKB-UniPathway"/>
</dbReference>
<dbReference type="GO" id="GO:0019557">
    <property type="term" value="P:L-histidine catabolic process to glutamate and formate"/>
    <property type="evidence" value="ECO:0007669"/>
    <property type="project" value="UniProtKB-UniPathway"/>
</dbReference>
<dbReference type="GO" id="GO:0045892">
    <property type="term" value="P:negative regulation of DNA-templated transcription"/>
    <property type="evidence" value="ECO:0007669"/>
    <property type="project" value="InterPro"/>
</dbReference>
<dbReference type="CDD" id="cd07377">
    <property type="entry name" value="WHTH_GntR"/>
    <property type="match status" value="1"/>
</dbReference>
<dbReference type="FunFam" id="1.10.10.10:FF:000079">
    <property type="entry name" value="GntR family transcriptional regulator"/>
    <property type="match status" value="1"/>
</dbReference>
<dbReference type="FunFam" id="3.40.1410.10:FF:000004">
    <property type="entry name" value="Histidine utilization repressor"/>
    <property type="match status" value="1"/>
</dbReference>
<dbReference type="Gene3D" id="3.40.1410.10">
    <property type="entry name" value="Chorismate lyase-like"/>
    <property type="match status" value="1"/>
</dbReference>
<dbReference type="Gene3D" id="1.10.10.10">
    <property type="entry name" value="Winged helix-like DNA-binding domain superfamily/Winged helix DNA-binding domain"/>
    <property type="match status" value="1"/>
</dbReference>
<dbReference type="InterPro" id="IPR050679">
    <property type="entry name" value="Bact_HTH_transcr_reg"/>
</dbReference>
<dbReference type="InterPro" id="IPR028978">
    <property type="entry name" value="Chorismate_lyase_/UTRA_dom_sf"/>
</dbReference>
<dbReference type="InterPro" id="IPR010248">
    <property type="entry name" value="His_ut_repres"/>
</dbReference>
<dbReference type="InterPro" id="IPR000524">
    <property type="entry name" value="Tscrpt_reg_HTH_GntR"/>
</dbReference>
<dbReference type="InterPro" id="IPR011663">
    <property type="entry name" value="UTRA"/>
</dbReference>
<dbReference type="InterPro" id="IPR036388">
    <property type="entry name" value="WH-like_DNA-bd_sf"/>
</dbReference>
<dbReference type="InterPro" id="IPR036390">
    <property type="entry name" value="WH_DNA-bd_sf"/>
</dbReference>
<dbReference type="NCBIfam" id="TIGR02018">
    <property type="entry name" value="his_ut_repres"/>
    <property type="match status" value="1"/>
</dbReference>
<dbReference type="PANTHER" id="PTHR44846">
    <property type="entry name" value="MANNOSYL-D-GLYCERATE TRANSPORT/METABOLISM SYSTEM REPRESSOR MNGR-RELATED"/>
    <property type="match status" value="1"/>
</dbReference>
<dbReference type="PANTHER" id="PTHR44846:SF16">
    <property type="entry name" value="TRANSCRIPTIONAL REGULATOR PHNF-RELATED"/>
    <property type="match status" value="1"/>
</dbReference>
<dbReference type="Pfam" id="PF00392">
    <property type="entry name" value="GntR"/>
    <property type="match status" value="1"/>
</dbReference>
<dbReference type="Pfam" id="PF07702">
    <property type="entry name" value="UTRA"/>
    <property type="match status" value="1"/>
</dbReference>
<dbReference type="PRINTS" id="PR00035">
    <property type="entry name" value="HTHGNTR"/>
</dbReference>
<dbReference type="SMART" id="SM00345">
    <property type="entry name" value="HTH_GNTR"/>
    <property type="match status" value="1"/>
</dbReference>
<dbReference type="SMART" id="SM00866">
    <property type="entry name" value="UTRA"/>
    <property type="match status" value="1"/>
</dbReference>
<dbReference type="SUPFAM" id="SSF64288">
    <property type="entry name" value="Chorismate lyase-like"/>
    <property type="match status" value="1"/>
</dbReference>
<dbReference type="SUPFAM" id="SSF46785">
    <property type="entry name" value="Winged helix' DNA-binding domain"/>
    <property type="match status" value="1"/>
</dbReference>
<dbReference type="PROSITE" id="PS50949">
    <property type="entry name" value="HTH_GNTR"/>
    <property type="match status" value="1"/>
</dbReference>
<keyword id="KW-0238">DNA-binding</keyword>
<keyword id="KW-0369">Histidine metabolism</keyword>
<keyword id="KW-0678">Repressor</keyword>
<keyword id="KW-0804">Transcription</keyword>
<keyword id="KW-0805">Transcription regulation</keyword>
<feature type="chain" id="PRO_0000050650" description="Histidine utilization repressor">
    <location>
        <begin position="1"/>
        <end position="248"/>
    </location>
</feature>
<feature type="domain" description="HTH gntR-type" evidence="1">
    <location>
        <begin position="18"/>
        <end position="86"/>
    </location>
</feature>
<feature type="DNA-binding region" description="H-T-H motif" evidence="1">
    <location>
        <begin position="46"/>
        <end position="65"/>
    </location>
</feature>
<gene>
    <name type="primary">hutC</name>
</gene>
<sequence>MPTPPVSALVAQMGEGPAPLYARVKQMIIQQIDNGSWPPHHRVPSESELVNELGFSRMTINRALRELTADGLLVRMQGVGTFVAEPKGRSALFEVNNIADEIAARGHQHSCQVITLTEEAAGSERALALDMREGQRVFHSLIVHFENGVPVQIEDRYVNAAIAPDYLKQDFTRQTPYAYLSQVAPLTEGEHVVEAILAEPEECRLLQIERGEPCLLIRRRTWSGRQPVTAARLIHPGSRHRLEGRFSK</sequence>
<protein>
    <recommendedName>
        <fullName>Histidine utilization repressor</fullName>
    </recommendedName>
</protein>